<sequence length="1249" mass="140671">MVHPVQVGKRTRMSFGKVKDVTEMPNLIEVQLDSYQWFLREGLHEVFEDINPITNFTGNLVLEFVDYKLDMDNIKYSVEECKERDATYAAPLKVSVRLQNNETGEIKEQEVFMGDFPLMTEQGTFIINGAERVIVSQLVRSPGVYYNYSIDKTGKKLYSATVIPNRGAWLEYETDSNDIIYVRIDKTRKLPITILARAMGFGSDQELLDFFGEDERFRASIEKDNTKTREEGLLEIYKRLRPGEPPTVDSAISLIDSLFFDAKRYDLSRVGRYKFNKKLALNLRIANQIAAMDVINPSTGEIMVEKGQKISRLLAEDIQNAGIKSVDILVDDKLVRVISNNFVDITKQVPFDVSDLQIKELVHYPTLREILDNYSDETTIKEEIKKNLSRLIPKHIIKDDIFATISYELGLPYGIGYVDDIDHLGNRRLRSVGELLQNQFRIGLSRMERVVKERMTIQDQESITPQMLINIRPVAAAIKEFFGSSQLSQFMDQTNPLSELTHKRRLSALGPGGLSRERAGFEVRDVHHSHYGRMCPIETPEGPNIGLINSLATFARVNEYGFIETPYRIVDKENARATEEIRYFTADEEDQCLIAQAKEPLDENGYFVDKKVTVRYLEDVLVVPATDVDLMDVSARQIVSVATAMIPFLENDDASRALMGSNMQRQAVPLLKPQAPIVGTGIEFKAAVDSGVLPKARNAGVVTFVSANEIRVKRDSDGGTDNYRLLKFKRSNQSSCINQRPIVNKGEIVFKNQVLADGPSTDLGEIALGKNIRMGFITWEGYNYEDAMLISEELVREDVFTSMHIEEYECEARDTKLGPEEITRDIPNVSEDALKDIDDRGIIRIGAEVRSGDILVGKVTPKGETELTAEERLLRAIFGEKAREVRDTSLRVPHGEAGIIVDIKVFTRENGDELNPGVNELVRCYIVQKRKISVGDKMAGRHGNKGVISRILPEEDMPFLPDGRPLQICLNPLGVPSRMNIGQVLEVHLGWAASKLGWHISTPVFDGATENEIEECLEKAGYNANGKTVLYDGRTGEPFDNLVTVGIMYILKLAHLVDDKIHARSTGPYSLVTQQPLGGKAQFGGQRFGEMEVWALEAYGAAHTLQEILTVKSDDVVGRVKTYEAIVKGENIPEPGVPESFKVLIKELQALCLDVKVLNENHQEVSLKEYTDDEIADLEVNIEGSEESVPVVPVVESNIEEVEVEVEVEVETETEDGYREDLDEIEYDENFEIETLETDLELDDFNDEH</sequence>
<feature type="chain" id="PRO_1000141678" description="DNA-directed RNA polymerase subunit beta">
    <location>
        <begin position="1"/>
        <end position="1249"/>
    </location>
</feature>
<name>RPOB_CLOBB</name>
<organism>
    <name type="scientific">Clostridium botulinum (strain Eklund 17B / Type B)</name>
    <dbReference type="NCBI Taxonomy" id="935198"/>
    <lineage>
        <taxon>Bacteria</taxon>
        <taxon>Bacillati</taxon>
        <taxon>Bacillota</taxon>
        <taxon>Clostridia</taxon>
        <taxon>Eubacteriales</taxon>
        <taxon>Clostridiaceae</taxon>
        <taxon>Clostridium</taxon>
    </lineage>
</organism>
<keyword id="KW-0240">DNA-directed RNA polymerase</keyword>
<keyword id="KW-0548">Nucleotidyltransferase</keyword>
<keyword id="KW-0804">Transcription</keyword>
<keyword id="KW-0808">Transferase</keyword>
<proteinExistence type="inferred from homology"/>
<comment type="function">
    <text evidence="1">DNA-dependent RNA polymerase catalyzes the transcription of DNA into RNA using the four ribonucleoside triphosphates as substrates.</text>
</comment>
<comment type="catalytic activity">
    <reaction evidence="1">
        <text>RNA(n) + a ribonucleoside 5'-triphosphate = RNA(n+1) + diphosphate</text>
        <dbReference type="Rhea" id="RHEA:21248"/>
        <dbReference type="Rhea" id="RHEA-COMP:14527"/>
        <dbReference type="Rhea" id="RHEA-COMP:17342"/>
        <dbReference type="ChEBI" id="CHEBI:33019"/>
        <dbReference type="ChEBI" id="CHEBI:61557"/>
        <dbReference type="ChEBI" id="CHEBI:140395"/>
        <dbReference type="EC" id="2.7.7.6"/>
    </reaction>
</comment>
<comment type="subunit">
    <text evidence="1">The RNAP catalytic core consists of 2 alpha, 1 beta, 1 beta' and 1 omega subunit. When a sigma factor is associated with the core the holoenzyme is formed, which can initiate transcription.</text>
</comment>
<comment type="similarity">
    <text evidence="1">Belongs to the RNA polymerase beta chain family.</text>
</comment>
<accession>B2TIG8</accession>
<dbReference type="EC" id="2.7.7.6" evidence="1"/>
<dbReference type="EMBL" id="CP001056">
    <property type="protein sequence ID" value="ACD21931.1"/>
    <property type="molecule type" value="Genomic_DNA"/>
</dbReference>
<dbReference type="SMR" id="B2TIG8"/>
<dbReference type="KEGG" id="cbk:CLL_A0231"/>
<dbReference type="PATRIC" id="fig|935198.13.peg.205"/>
<dbReference type="HOGENOM" id="CLU_000524_4_1_9"/>
<dbReference type="Proteomes" id="UP000001195">
    <property type="component" value="Chromosome"/>
</dbReference>
<dbReference type="GO" id="GO:0000428">
    <property type="term" value="C:DNA-directed RNA polymerase complex"/>
    <property type="evidence" value="ECO:0007669"/>
    <property type="project" value="UniProtKB-KW"/>
</dbReference>
<dbReference type="GO" id="GO:0003677">
    <property type="term" value="F:DNA binding"/>
    <property type="evidence" value="ECO:0007669"/>
    <property type="project" value="UniProtKB-UniRule"/>
</dbReference>
<dbReference type="GO" id="GO:0003899">
    <property type="term" value="F:DNA-directed RNA polymerase activity"/>
    <property type="evidence" value="ECO:0007669"/>
    <property type="project" value="UniProtKB-UniRule"/>
</dbReference>
<dbReference type="GO" id="GO:0032549">
    <property type="term" value="F:ribonucleoside binding"/>
    <property type="evidence" value="ECO:0007669"/>
    <property type="project" value="InterPro"/>
</dbReference>
<dbReference type="GO" id="GO:0006351">
    <property type="term" value="P:DNA-templated transcription"/>
    <property type="evidence" value="ECO:0007669"/>
    <property type="project" value="UniProtKB-UniRule"/>
</dbReference>
<dbReference type="CDD" id="cd00653">
    <property type="entry name" value="RNA_pol_B_RPB2"/>
    <property type="match status" value="1"/>
</dbReference>
<dbReference type="FunFam" id="3.90.1800.10:FF:000001">
    <property type="entry name" value="DNA-directed RNA polymerase subunit beta"/>
    <property type="match status" value="1"/>
</dbReference>
<dbReference type="Gene3D" id="2.40.50.100">
    <property type="match status" value="1"/>
</dbReference>
<dbReference type="Gene3D" id="2.40.50.150">
    <property type="match status" value="1"/>
</dbReference>
<dbReference type="Gene3D" id="3.90.1100.10">
    <property type="match status" value="2"/>
</dbReference>
<dbReference type="Gene3D" id="2.40.270.10">
    <property type="entry name" value="DNA-directed RNA polymerase, subunit 2, domain 6"/>
    <property type="match status" value="1"/>
</dbReference>
<dbReference type="Gene3D" id="3.90.1800.10">
    <property type="entry name" value="RNA polymerase alpha subunit dimerisation domain"/>
    <property type="match status" value="1"/>
</dbReference>
<dbReference type="Gene3D" id="3.90.1110.10">
    <property type="entry name" value="RNA polymerase Rpb2, domain 2"/>
    <property type="match status" value="1"/>
</dbReference>
<dbReference type="HAMAP" id="MF_01321">
    <property type="entry name" value="RNApol_bact_RpoB"/>
    <property type="match status" value="1"/>
</dbReference>
<dbReference type="InterPro" id="IPR019462">
    <property type="entry name" value="DNA-dir_RNA_pol_bsu_external_1"/>
</dbReference>
<dbReference type="InterPro" id="IPR015712">
    <property type="entry name" value="DNA-dir_RNA_pol_su2"/>
</dbReference>
<dbReference type="InterPro" id="IPR007120">
    <property type="entry name" value="DNA-dir_RNAP_su2_dom"/>
</dbReference>
<dbReference type="InterPro" id="IPR037033">
    <property type="entry name" value="DNA-dir_RNAP_su2_hyb_sf"/>
</dbReference>
<dbReference type="InterPro" id="IPR010243">
    <property type="entry name" value="RNA_pol_bsu_bac"/>
</dbReference>
<dbReference type="InterPro" id="IPR007121">
    <property type="entry name" value="RNA_pol_bsu_CS"/>
</dbReference>
<dbReference type="InterPro" id="IPR007644">
    <property type="entry name" value="RNA_pol_bsu_protrusion"/>
</dbReference>
<dbReference type="InterPro" id="IPR007642">
    <property type="entry name" value="RNA_pol_Rpb2_2"/>
</dbReference>
<dbReference type="InterPro" id="IPR037034">
    <property type="entry name" value="RNA_pol_Rpb2_2_sf"/>
</dbReference>
<dbReference type="InterPro" id="IPR007645">
    <property type="entry name" value="RNA_pol_Rpb2_3"/>
</dbReference>
<dbReference type="InterPro" id="IPR007641">
    <property type="entry name" value="RNA_pol_Rpb2_7"/>
</dbReference>
<dbReference type="InterPro" id="IPR014724">
    <property type="entry name" value="RNA_pol_RPB2_OB-fold"/>
</dbReference>
<dbReference type="NCBIfam" id="NF001616">
    <property type="entry name" value="PRK00405.1"/>
    <property type="match status" value="1"/>
</dbReference>
<dbReference type="NCBIfam" id="TIGR02013">
    <property type="entry name" value="rpoB"/>
    <property type="match status" value="1"/>
</dbReference>
<dbReference type="PANTHER" id="PTHR20856">
    <property type="entry name" value="DNA-DIRECTED RNA POLYMERASE I SUBUNIT 2"/>
    <property type="match status" value="1"/>
</dbReference>
<dbReference type="Pfam" id="PF04563">
    <property type="entry name" value="RNA_pol_Rpb2_1"/>
    <property type="match status" value="1"/>
</dbReference>
<dbReference type="Pfam" id="PF04561">
    <property type="entry name" value="RNA_pol_Rpb2_2"/>
    <property type="match status" value="2"/>
</dbReference>
<dbReference type="Pfam" id="PF04565">
    <property type="entry name" value="RNA_pol_Rpb2_3"/>
    <property type="match status" value="1"/>
</dbReference>
<dbReference type="Pfam" id="PF10385">
    <property type="entry name" value="RNA_pol_Rpb2_45"/>
    <property type="match status" value="1"/>
</dbReference>
<dbReference type="Pfam" id="PF00562">
    <property type="entry name" value="RNA_pol_Rpb2_6"/>
    <property type="match status" value="1"/>
</dbReference>
<dbReference type="Pfam" id="PF04560">
    <property type="entry name" value="RNA_pol_Rpb2_7"/>
    <property type="match status" value="1"/>
</dbReference>
<dbReference type="SUPFAM" id="SSF64484">
    <property type="entry name" value="beta and beta-prime subunits of DNA dependent RNA-polymerase"/>
    <property type="match status" value="1"/>
</dbReference>
<dbReference type="PROSITE" id="PS01166">
    <property type="entry name" value="RNA_POL_BETA"/>
    <property type="match status" value="1"/>
</dbReference>
<evidence type="ECO:0000255" key="1">
    <source>
        <dbReference type="HAMAP-Rule" id="MF_01321"/>
    </source>
</evidence>
<reference key="1">
    <citation type="submission" date="2008-04" db="EMBL/GenBank/DDBJ databases">
        <title>Complete sequence of Clostridium botulinum strain Eklund.</title>
        <authorList>
            <person name="Brinkac L.M."/>
            <person name="Brown J.L."/>
            <person name="Bruce D."/>
            <person name="Detter C."/>
            <person name="Munk C."/>
            <person name="Smith L.A."/>
            <person name="Smith T.J."/>
            <person name="Sutton G."/>
            <person name="Brettin T.S."/>
        </authorList>
    </citation>
    <scope>NUCLEOTIDE SEQUENCE [LARGE SCALE GENOMIC DNA]</scope>
    <source>
        <strain>Eklund 17B / Type B</strain>
    </source>
</reference>
<protein>
    <recommendedName>
        <fullName evidence="1">DNA-directed RNA polymerase subunit beta</fullName>
        <shortName evidence="1">RNAP subunit beta</shortName>
        <ecNumber evidence="1">2.7.7.6</ecNumber>
    </recommendedName>
    <alternativeName>
        <fullName evidence="1">RNA polymerase subunit beta</fullName>
    </alternativeName>
    <alternativeName>
        <fullName evidence="1">Transcriptase subunit beta</fullName>
    </alternativeName>
</protein>
<gene>
    <name evidence="1" type="primary">rpoB</name>
    <name type="ordered locus">CLL_A0231</name>
</gene>